<proteinExistence type="inferred from homology"/>
<organism>
    <name type="scientific">Carassius auratus</name>
    <name type="common">Goldfish</name>
    <dbReference type="NCBI Taxonomy" id="7957"/>
    <lineage>
        <taxon>Eukaryota</taxon>
        <taxon>Metazoa</taxon>
        <taxon>Chordata</taxon>
        <taxon>Craniata</taxon>
        <taxon>Vertebrata</taxon>
        <taxon>Euteleostomi</taxon>
        <taxon>Actinopterygii</taxon>
        <taxon>Neopterygii</taxon>
        <taxon>Teleostei</taxon>
        <taxon>Ostariophysi</taxon>
        <taxon>Cypriniformes</taxon>
        <taxon>Cyprinidae</taxon>
        <taxon>Cyprininae</taxon>
        <taxon>Carassius</taxon>
    </lineage>
</organism>
<gene>
    <name type="primary">sst1a</name>
</gene>
<comment type="function">
    <text>Somatostatin inhibits the release of somatotropin.</text>
</comment>
<comment type="subcellular location">
    <subcellularLocation>
        <location>Secreted</location>
    </subcellularLocation>
</comment>
<comment type="similarity">
    <text evidence="3">Belongs to the somatostatin family.</text>
</comment>
<reference key="1">
    <citation type="journal article" date="1998" name="Comp. Biochem. Physiol.">
        <title>Evolution of neuroendocrine peptide systems: gonadotropin-releasing hormone and somatostatin.</title>
        <authorList>
            <person name="Lin X.-W."/>
            <person name="Otto C.J."/>
            <person name="Peter R.E."/>
        </authorList>
    </citation>
    <scope>NUCLEOTIDE SEQUENCE [MRNA]</scope>
    <source>
        <tissue>Brain</tissue>
    </source>
</reference>
<feature type="signal peptide" evidence="2">
    <location>
        <begin position="1"/>
        <end position="24"/>
    </location>
</feature>
<feature type="propeptide" id="PRO_0000033115" evidence="2">
    <location>
        <begin position="25"/>
        <end position="88"/>
    </location>
</feature>
<feature type="peptide" id="PRO_0000033116" description="Somatostatin-26" evidence="2">
    <location>
        <begin position="89"/>
        <end position="114"/>
    </location>
</feature>
<feature type="peptide" id="PRO_0000033117" description="Somatostatin-14">
    <location>
        <begin position="101"/>
        <end position="114"/>
    </location>
</feature>
<feature type="disulfide bond" evidence="1">
    <location>
        <begin position="103"/>
        <end position="114"/>
    </location>
</feature>
<keyword id="KW-0165">Cleavage on pair of basic residues</keyword>
<keyword id="KW-1015">Disulfide bond</keyword>
<keyword id="KW-0372">Hormone</keyword>
<keyword id="KW-1185">Reference proteome</keyword>
<keyword id="KW-0964">Secreted</keyword>
<keyword id="KW-0732">Signal</keyword>
<accession>Q9YGH5</accession>
<name>SMS1A_CARAU</name>
<sequence length="114" mass="12575">MLSTRIQCALALLSLALAVCSVSAAPTDAKLRQLLQRSLLNPAGKQELARYTLADLLSELVQAENEALEPEDLSRAVEKDEVRLELERAAGPMLAPRERKAGCKNFFWKTFTSC</sequence>
<evidence type="ECO:0000250" key="1"/>
<evidence type="ECO:0000255" key="2"/>
<evidence type="ECO:0000305" key="3"/>
<protein>
    <recommendedName>
        <fullName>Somatostatin-1A</fullName>
    </recommendedName>
    <component>
        <recommendedName>
            <fullName>Somatostatin-26</fullName>
        </recommendedName>
    </component>
    <component>
        <recommendedName>
            <fullName>Somatostatin-14</fullName>
        </recommendedName>
    </component>
</protein>
<dbReference type="EMBL" id="U40754">
    <property type="protein sequence ID" value="AAD09359.1"/>
    <property type="molecule type" value="mRNA"/>
</dbReference>
<dbReference type="OrthoDB" id="9948948at2759"/>
<dbReference type="Proteomes" id="UP000515129">
    <property type="component" value="Unplaced"/>
</dbReference>
<dbReference type="GO" id="GO:0005615">
    <property type="term" value="C:extracellular space"/>
    <property type="evidence" value="ECO:0007669"/>
    <property type="project" value="TreeGrafter"/>
</dbReference>
<dbReference type="GO" id="GO:0005179">
    <property type="term" value="F:hormone activity"/>
    <property type="evidence" value="ECO:0007669"/>
    <property type="project" value="UniProtKB-KW"/>
</dbReference>
<dbReference type="GO" id="GO:0030334">
    <property type="term" value="P:regulation of cell migration"/>
    <property type="evidence" value="ECO:0007669"/>
    <property type="project" value="TreeGrafter"/>
</dbReference>
<dbReference type="InterPro" id="IPR004250">
    <property type="entry name" value="Somatostatin"/>
</dbReference>
<dbReference type="InterPro" id="IPR018142">
    <property type="entry name" value="Somatostatin/Cortistatin_C"/>
</dbReference>
<dbReference type="PANTHER" id="PTHR10558">
    <property type="entry name" value="SOMATOSTATIN"/>
    <property type="match status" value="1"/>
</dbReference>
<dbReference type="PANTHER" id="PTHR10558:SF2">
    <property type="entry name" value="SOMATOSTATIN"/>
    <property type="match status" value="1"/>
</dbReference>
<dbReference type="Pfam" id="PF03002">
    <property type="entry name" value="Somatostatin"/>
    <property type="match status" value="1"/>
</dbReference>
<dbReference type="PIRSF" id="PIRSF001814">
    <property type="entry name" value="Somatostatin"/>
    <property type="match status" value="1"/>
</dbReference>